<keyword id="KW-0963">Cytoplasm</keyword>
<keyword id="KW-0251">Elongation factor</keyword>
<keyword id="KW-0342">GTP-binding</keyword>
<keyword id="KW-0378">Hydrolase</keyword>
<keyword id="KW-0460">Magnesium</keyword>
<keyword id="KW-0479">Metal-binding</keyword>
<keyword id="KW-0547">Nucleotide-binding</keyword>
<keyword id="KW-0648">Protein biosynthesis</keyword>
<organism>
    <name type="scientific">Leptospira interrogans serogroup Icterohaemorrhagiae serovar copenhageni (strain Fiocruz L1-130)</name>
    <dbReference type="NCBI Taxonomy" id="267671"/>
    <lineage>
        <taxon>Bacteria</taxon>
        <taxon>Pseudomonadati</taxon>
        <taxon>Spirochaetota</taxon>
        <taxon>Spirochaetia</taxon>
        <taxon>Leptospirales</taxon>
        <taxon>Leptospiraceae</taxon>
        <taxon>Leptospira</taxon>
    </lineage>
</organism>
<sequence>MAKEKFDRSKPHLNVGTIGHVDHGKTTLTAAITTTLAKAIGGKNKAVAYDQIDNAPEEKARGITIATSHQEYETANRHYAHVDCPGHADYVKNMITGAAQMDAAILVVSATDGPMPQTKEHILLARQVGVPYVIVFINKADMLAADERAEMIEMVEMDVRELLNKYSFPGDTTPIVHGSAVKALEGDESEIGMPAILKLMEALDTFVPNPKRVIDKPFLMPVEDVFSITGRGTVATGRVEQGVLKVNDEVEIIGIRPTTKTVVTGIEMFRKLLDQAEAGDNIGALLRGTKKEEIERGQVLAKPGSITPHKKFAAEVYVLTKDEGGRHTPFINNYRPQFYFRTTDVTGVCNLPNGVEMVMPGDNVSLTVELISPIAMDKGLKFAIREGGRTIGSGVVAEITE</sequence>
<reference key="1">
    <citation type="journal article" date="2004" name="J. Bacteriol.">
        <title>Comparative genomics of two Leptospira interrogans serovars reveals novel insights into physiology and pathogenesis.</title>
        <authorList>
            <person name="Nascimento A.L.T.O."/>
            <person name="Ko A.I."/>
            <person name="Martins E.A.L."/>
            <person name="Monteiro-Vitorello C.B."/>
            <person name="Ho P.L."/>
            <person name="Haake D.A."/>
            <person name="Verjovski-Almeida S."/>
            <person name="Hartskeerl R.A."/>
            <person name="Marques M.V."/>
            <person name="Oliveira M.C."/>
            <person name="Menck C.F.M."/>
            <person name="Leite L.C.C."/>
            <person name="Carrer H."/>
            <person name="Coutinho L.L."/>
            <person name="Degrave W.M."/>
            <person name="Dellagostin O.A."/>
            <person name="El-Dorry H."/>
            <person name="Ferro E.S."/>
            <person name="Ferro M.I.T."/>
            <person name="Furlan L.R."/>
            <person name="Gamberini M."/>
            <person name="Giglioti E.A."/>
            <person name="Goes-Neto A."/>
            <person name="Goldman G.H."/>
            <person name="Goldman M.H.S."/>
            <person name="Harakava R."/>
            <person name="Jeronimo S.M.B."/>
            <person name="Junqueira-de-Azevedo I.L.M."/>
            <person name="Kimura E.T."/>
            <person name="Kuramae E.E."/>
            <person name="Lemos E.G.M."/>
            <person name="Lemos M.V.F."/>
            <person name="Marino C.L."/>
            <person name="Nunes L.R."/>
            <person name="de Oliveira R.C."/>
            <person name="Pereira G.G."/>
            <person name="Reis M.S."/>
            <person name="Schriefer A."/>
            <person name="Siqueira W.J."/>
            <person name="Sommer P."/>
            <person name="Tsai S.M."/>
            <person name="Simpson A.J.G."/>
            <person name="Ferro J.A."/>
            <person name="Camargo L.E.A."/>
            <person name="Kitajima J.P."/>
            <person name="Setubal J.C."/>
            <person name="Van Sluys M.A."/>
        </authorList>
    </citation>
    <scope>NUCLEOTIDE SEQUENCE [LARGE SCALE GENOMIC DNA]</scope>
    <source>
        <strain>Fiocruz L1-130</strain>
    </source>
</reference>
<accession>Q72NF9</accession>
<comment type="function">
    <text evidence="2">GTP hydrolase that promotes the GTP-dependent binding of aminoacyl-tRNA to the A-site of ribosomes during protein biosynthesis.</text>
</comment>
<comment type="catalytic activity">
    <reaction evidence="2">
        <text>GTP + H2O = GDP + phosphate + H(+)</text>
        <dbReference type="Rhea" id="RHEA:19669"/>
        <dbReference type="ChEBI" id="CHEBI:15377"/>
        <dbReference type="ChEBI" id="CHEBI:15378"/>
        <dbReference type="ChEBI" id="CHEBI:37565"/>
        <dbReference type="ChEBI" id="CHEBI:43474"/>
        <dbReference type="ChEBI" id="CHEBI:58189"/>
        <dbReference type="EC" id="3.6.5.3"/>
    </reaction>
    <physiologicalReaction direction="left-to-right" evidence="2">
        <dbReference type="Rhea" id="RHEA:19670"/>
    </physiologicalReaction>
</comment>
<comment type="subunit">
    <text evidence="2">Monomer.</text>
</comment>
<comment type="subcellular location">
    <subcellularLocation>
        <location evidence="2">Cytoplasm</location>
    </subcellularLocation>
</comment>
<comment type="similarity">
    <text evidence="2">Belongs to the TRAFAC class translation factor GTPase superfamily. Classic translation factor GTPase family. EF-Tu/EF-1A subfamily.</text>
</comment>
<evidence type="ECO:0000250" key="1"/>
<evidence type="ECO:0000255" key="2">
    <source>
        <dbReference type="HAMAP-Rule" id="MF_00118"/>
    </source>
</evidence>
<feature type="chain" id="PRO_0000091339" description="Elongation factor Tu">
    <location>
        <begin position="1"/>
        <end position="401"/>
    </location>
</feature>
<feature type="domain" description="tr-type G">
    <location>
        <begin position="10"/>
        <end position="211"/>
    </location>
</feature>
<feature type="region of interest" description="G1" evidence="1">
    <location>
        <begin position="19"/>
        <end position="26"/>
    </location>
</feature>
<feature type="region of interest" description="G2" evidence="1">
    <location>
        <begin position="62"/>
        <end position="66"/>
    </location>
</feature>
<feature type="region of interest" description="G3" evidence="1">
    <location>
        <begin position="83"/>
        <end position="86"/>
    </location>
</feature>
<feature type="region of interest" description="G4" evidence="1">
    <location>
        <begin position="138"/>
        <end position="141"/>
    </location>
</feature>
<feature type="region of interest" description="G5" evidence="1">
    <location>
        <begin position="179"/>
        <end position="181"/>
    </location>
</feature>
<feature type="binding site" evidence="2">
    <location>
        <begin position="19"/>
        <end position="26"/>
    </location>
    <ligand>
        <name>GTP</name>
        <dbReference type="ChEBI" id="CHEBI:37565"/>
    </ligand>
</feature>
<feature type="binding site" evidence="2">
    <location>
        <position position="26"/>
    </location>
    <ligand>
        <name>Mg(2+)</name>
        <dbReference type="ChEBI" id="CHEBI:18420"/>
    </ligand>
</feature>
<feature type="binding site" evidence="2">
    <location>
        <begin position="83"/>
        <end position="87"/>
    </location>
    <ligand>
        <name>GTP</name>
        <dbReference type="ChEBI" id="CHEBI:37565"/>
    </ligand>
</feature>
<feature type="binding site" evidence="2">
    <location>
        <begin position="138"/>
        <end position="141"/>
    </location>
    <ligand>
        <name>GTP</name>
        <dbReference type="ChEBI" id="CHEBI:37565"/>
    </ligand>
</feature>
<protein>
    <recommendedName>
        <fullName evidence="2">Elongation factor Tu</fullName>
        <shortName evidence="2">EF-Tu</shortName>
        <ecNumber evidence="2">3.6.5.3</ecNumber>
    </recommendedName>
</protein>
<name>EFTU_LEPIC</name>
<proteinExistence type="inferred from homology"/>
<dbReference type="EC" id="3.6.5.3" evidence="2"/>
<dbReference type="EMBL" id="AE016823">
    <property type="protein sequence ID" value="AAS71428.1"/>
    <property type="molecule type" value="Genomic_DNA"/>
</dbReference>
<dbReference type="RefSeq" id="WP_001040571.1">
    <property type="nucleotide sequence ID" value="NC_005823.1"/>
</dbReference>
<dbReference type="SMR" id="Q72NF9"/>
<dbReference type="GeneID" id="61142749"/>
<dbReference type="KEGG" id="lic:LIC_12875"/>
<dbReference type="HOGENOM" id="CLU_007265_0_1_12"/>
<dbReference type="Proteomes" id="UP000007037">
    <property type="component" value="Chromosome I"/>
</dbReference>
<dbReference type="GO" id="GO:0005829">
    <property type="term" value="C:cytosol"/>
    <property type="evidence" value="ECO:0007669"/>
    <property type="project" value="TreeGrafter"/>
</dbReference>
<dbReference type="GO" id="GO:0005525">
    <property type="term" value="F:GTP binding"/>
    <property type="evidence" value="ECO:0007669"/>
    <property type="project" value="UniProtKB-UniRule"/>
</dbReference>
<dbReference type="GO" id="GO:0003924">
    <property type="term" value="F:GTPase activity"/>
    <property type="evidence" value="ECO:0007669"/>
    <property type="project" value="InterPro"/>
</dbReference>
<dbReference type="GO" id="GO:0003746">
    <property type="term" value="F:translation elongation factor activity"/>
    <property type="evidence" value="ECO:0007669"/>
    <property type="project" value="UniProtKB-UniRule"/>
</dbReference>
<dbReference type="GO" id="GO:0044542">
    <property type="term" value="P:symbiont-mediated activation of host plasminogen"/>
    <property type="evidence" value="ECO:0000269"/>
    <property type="project" value="SigSci"/>
</dbReference>
<dbReference type="GO" id="GO:0141203">
    <property type="term" value="P:symbiont-mediated suppression of host complement activation by activation of host proteases"/>
    <property type="evidence" value="ECO:0000269"/>
    <property type="project" value="SigSci"/>
</dbReference>
<dbReference type="CDD" id="cd01884">
    <property type="entry name" value="EF_Tu"/>
    <property type="match status" value="1"/>
</dbReference>
<dbReference type="CDD" id="cd03697">
    <property type="entry name" value="EFTU_II"/>
    <property type="match status" value="1"/>
</dbReference>
<dbReference type="CDD" id="cd03707">
    <property type="entry name" value="EFTU_III"/>
    <property type="match status" value="1"/>
</dbReference>
<dbReference type="FunFam" id="2.40.30.10:FF:000001">
    <property type="entry name" value="Elongation factor Tu"/>
    <property type="match status" value="1"/>
</dbReference>
<dbReference type="FunFam" id="3.40.50.300:FF:000003">
    <property type="entry name" value="Elongation factor Tu"/>
    <property type="match status" value="1"/>
</dbReference>
<dbReference type="Gene3D" id="3.40.50.300">
    <property type="entry name" value="P-loop containing nucleotide triphosphate hydrolases"/>
    <property type="match status" value="1"/>
</dbReference>
<dbReference type="Gene3D" id="2.40.30.10">
    <property type="entry name" value="Translation factors"/>
    <property type="match status" value="2"/>
</dbReference>
<dbReference type="HAMAP" id="MF_00118_B">
    <property type="entry name" value="EF_Tu_B"/>
    <property type="match status" value="1"/>
</dbReference>
<dbReference type="InterPro" id="IPR041709">
    <property type="entry name" value="EF-Tu_GTP-bd"/>
</dbReference>
<dbReference type="InterPro" id="IPR050055">
    <property type="entry name" value="EF-Tu_GTPase"/>
</dbReference>
<dbReference type="InterPro" id="IPR004161">
    <property type="entry name" value="EFTu-like_2"/>
</dbReference>
<dbReference type="InterPro" id="IPR033720">
    <property type="entry name" value="EFTU_2"/>
</dbReference>
<dbReference type="InterPro" id="IPR031157">
    <property type="entry name" value="G_TR_CS"/>
</dbReference>
<dbReference type="InterPro" id="IPR027417">
    <property type="entry name" value="P-loop_NTPase"/>
</dbReference>
<dbReference type="InterPro" id="IPR005225">
    <property type="entry name" value="Small_GTP-bd"/>
</dbReference>
<dbReference type="InterPro" id="IPR000795">
    <property type="entry name" value="T_Tr_GTP-bd_dom"/>
</dbReference>
<dbReference type="InterPro" id="IPR009000">
    <property type="entry name" value="Transl_B-barrel_sf"/>
</dbReference>
<dbReference type="InterPro" id="IPR009001">
    <property type="entry name" value="Transl_elong_EF1A/Init_IF2_C"/>
</dbReference>
<dbReference type="InterPro" id="IPR004541">
    <property type="entry name" value="Transl_elong_EFTu/EF1A_bac/org"/>
</dbReference>
<dbReference type="InterPro" id="IPR004160">
    <property type="entry name" value="Transl_elong_EFTu/EF1A_C"/>
</dbReference>
<dbReference type="NCBIfam" id="TIGR00485">
    <property type="entry name" value="EF-Tu"/>
    <property type="match status" value="1"/>
</dbReference>
<dbReference type="NCBIfam" id="NF000766">
    <property type="entry name" value="PRK00049.1"/>
    <property type="match status" value="1"/>
</dbReference>
<dbReference type="NCBIfam" id="NF009372">
    <property type="entry name" value="PRK12735.1"/>
    <property type="match status" value="1"/>
</dbReference>
<dbReference type="NCBIfam" id="NF009373">
    <property type="entry name" value="PRK12736.1"/>
    <property type="match status" value="1"/>
</dbReference>
<dbReference type="NCBIfam" id="TIGR00231">
    <property type="entry name" value="small_GTP"/>
    <property type="match status" value="1"/>
</dbReference>
<dbReference type="PANTHER" id="PTHR43721:SF22">
    <property type="entry name" value="ELONGATION FACTOR TU, MITOCHONDRIAL"/>
    <property type="match status" value="1"/>
</dbReference>
<dbReference type="PANTHER" id="PTHR43721">
    <property type="entry name" value="ELONGATION FACTOR TU-RELATED"/>
    <property type="match status" value="1"/>
</dbReference>
<dbReference type="Pfam" id="PF00009">
    <property type="entry name" value="GTP_EFTU"/>
    <property type="match status" value="1"/>
</dbReference>
<dbReference type="Pfam" id="PF03144">
    <property type="entry name" value="GTP_EFTU_D2"/>
    <property type="match status" value="1"/>
</dbReference>
<dbReference type="Pfam" id="PF03143">
    <property type="entry name" value="GTP_EFTU_D3"/>
    <property type="match status" value="1"/>
</dbReference>
<dbReference type="PRINTS" id="PR00315">
    <property type="entry name" value="ELONGATNFCT"/>
</dbReference>
<dbReference type="SUPFAM" id="SSF50465">
    <property type="entry name" value="EF-Tu/eEF-1alpha/eIF2-gamma C-terminal domain"/>
    <property type="match status" value="1"/>
</dbReference>
<dbReference type="SUPFAM" id="SSF52540">
    <property type="entry name" value="P-loop containing nucleoside triphosphate hydrolases"/>
    <property type="match status" value="1"/>
</dbReference>
<dbReference type="SUPFAM" id="SSF50447">
    <property type="entry name" value="Translation proteins"/>
    <property type="match status" value="1"/>
</dbReference>
<dbReference type="PROSITE" id="PS00301">
    <property type="entry name" value="G_TR_1"/>
    <property type="match status" value="1"/>
</dbReference>
<dbReference type="PROSITE" id="PS51722">
    <property type="entry name" value="G_TR_2"/>
    <property type="match status" value="1"/>
</dbReference>
<gene>
    <name evidence="2" type="primary">tuf</name>
    <name type="ordered locus">LIC_12875</name>
</gene>